<organism>
    <name type="scientific">Bacillus anthracis (strain A0248)</name>
    <dbReference type="NCBI Taxonomy" id="592021"/>
    <lineage>
        <taxon>Bacteria</taxon>
        <taxon>Bacillati</taxon>
        <taxon>Bacillota</taxon>
        <taxon>Bacilli</taxon>
        <taxon>Bacillales</taxon>
        <taxon>Bacillaceae</taxon>
        <taxon>Bacillus</taxon>
        <taxon>Bacillus cereus group</taxon>
    </lineage>
</organism>
<feature type="chain" id="PRO_1000123783" description="Arginine repressor">
    <location>
        <begin position="1"/>
        <end position="149"/>
    </location>
</feature>
<protein>
    <recommendedName>
        <fullName evidence="1">Arginine repressor</fullName>
    </recommendedName>
</protein>
<comment type="function">
    <text evidence="1">Regulates arginine biosynthesis genes.</text>
</comment>
<comment type="pathway">
    <text>Amino-acid biosynthesis; L-arginine biosynthesis [regulation].</text>
</comment>
<comment type="subcellular location">
    <subcellularLocation>
        <location evidence="1">Cytoplasm</location>
    </subcellularLocation>
</comment>
<comment type="similarity">
    <text evidence="1">Belongs to the ArgR family.</text>
</comment>
<name>ARGR_BACAA</name>
<accession>C3P7V4</accession>
<evidence type="ECO:0000255" key="1">
    <source>
        <dbReference type="HAMAP-Rule" id="MF_00173"/>
    </source>
</evidence>
<dbReference type="EMBL" id="CP001598">
    <property type="protein sequence ID" value="ACQ50039.1"/>
    <property type="molecule type" value="Genomic_DNA"/>
</dbReference>
<dbReference type="RefSeq" id="WP_001032581.1">
    <property type="nucleotide sequence ID" value="NC_012659.1"/>
</dbReference>
<dbReference type="SMR" id="C3P7V4"/>
<dbReference type="GeneID" id="93006927"/>
<dbReference type="KEGG" id="bai:BAA_4416"/>
<dbReference type="HOGENOM" id="CLU_097103_3_0_9"/>
<dbReference type="UniPathway" id="UPA00068"/>
<dbReference type="GO" id="GO:0005737">
    <property type="term" value="C:cytoplasm"/>
    <property type="evidence" value="ECO:0007669"/>
    <property type="project" value="UniProtKB-SubCell"/>
</dbReference>
<dbReference type="GO" id="GO:0034618">
    <property type="term" value="F:arginine binding"/>
    <property type="evidence" value="ECO:0007669"/>
    <property type="project" value="InterPro"/>
</dbReference>
<dbReference type="GO" id="GO:0003677">
    <property type="term" value="F:DNA binding"/>
    <property type="evidence" value="ECO:0007669"/>
    <property type="project" value="UniProtKB-KW"/>
</dbReference>
<dbReference type="GO" id="GO:0003700">
    <property type="term" value="F:DNA-binding transcription factor activity"/>
    <property type="evidence" value="ECO:0007669"/>
    <property type="project" value="UniProtKB-UniRule"/>
</dbReference>
<dbReference type="GO" id="GO:0006526">
    <property type="term" value="P:L-arginine biosynthetic process"/>
    <property type="evidence" value="ECO:0007669"/>
    <property type="project" value="UniProtKB-UniPathway"/>
</dbReference>
<dbReference type="GO" id="GO:0051259">
    <property type="term" value="P:protein complex oligomerization"/>
    <property type="evidence" value="ECO:0007669"/>
    <property type="project" value="InterPro"/>
</dbReference>
<dbReference type="GO" id="GO:1900079">
    <property type="term" value="P:regulation of arginine biosynthetic process"/>
    <property type="evidence" value="ECO:0007669"/>
    <property type="project" value="UniProtKB-UniRule"/>
</dbReference>
<dbReference type="FunFam" id="1.10.10.10:FF:000172">
    <property type="entry name" value="Arginine repressor"/>
    <property type="match status" value="1"/>
</dbReference>
<dbReference type="FunFam" id="3.30.1360.40:FF:000006">
    <property type="entry name" value="Arginine repressor"/>
    <property type="match status" value="1"/>
</dbReference>
<dbReference type="Gene3D" id="3.30.1360.40">
    <property type="match status" value="1"/>
</dbReference>
<dbReference type="Gene3D" id="1.10.10.10">
    <property type="entry name" value="Winged helix-like DNA-binding domain superfamily/Winged helix DNA-binding domain"/>
    <property type="match status" value="1"/>
</dbReference>
<dbReference type="HAMAP" id="MF_00173">
    <property type="entry name" value="Arg_repressor"/>
    <property type="match status" value="1"/>
</dbReference>
<dbReference type="InterPro" id="IPR001669">
    <property type="entry name" value="Arg_repress"/>
</dbReference>
<dbReference type="InterPro" id="IPR020899">
    <property type="entry name" value="Arg_repress_C"/>
</dbReference>
<dbReference type="InterPro" id="IPR036251">
    <property type="entry name" value="Arg_repress_C_sf"/>
</dbReference>
<dbReference type="InterPro" id="IPR020900">
    <property type="entry name" value="Arg_repress_DNA-bd"/>
</dbReference>
<dbReference type="InterPro" id="IPR036388">
    <property type="entry name" value="WH-like_DNA-bd_sf"/>
</dbReference>
<dbReference type="InterPro" id="IPR036390">
    <property type="entry name" value="WH_DNA-bd_sf"/>
</dbReference>
<dbReference type="NCBIfam" id="TIGR01529">
    <property type="entry name" value="argR_whole"/>
    <property type="match status" value="1"/>
</dbReference>
<dbReference type="NCBIfam" id="NF003281">
    <property type="entry name" value="PRK04280.1"/>
    <property type="match status" value="1"/>
</dbReference>
<dbReference type="PANTHER" id="PTHR34471">
    <property type="entry name" value="ARGININE REPRESSOR"/>
    <property type="match status" value="1"/>
</dbReference>
<dbReference type="PANTHER" id="PTHR34471:SF1">
    <property type="entry name" value="ARGININE REPRESSOR"/>
    <property type="match status" value="1"/>
</dbReference>
<dbReference type="Pfam" id="PF01316">
    <property type="entry name" value="Arg_repressor"/>
    <property type="match status" value="1"/>
</dbReference>
<dbReference type="Pfam" id="PF02863">
    <property type="entry name" value="Arg_repressor_C"/>
    <property type="match status" value="1"/>
</dbReference>
<dbReference type="PRINTS" id="PR01467">
    <property type="entry name" value="ARGREPRESSOR"/>
</dbReference>
<dbReference type="SUPFAM" id="SSF55252">
    <property type="entry name" value="C-terminal domain of arginine repressor"/>
    <property type="match status" value="1"/>
</dbReference>
<dbReference type="SUPFAM" id="SSF46785">
    <property type="entry name" value="Winged helix' DNA-binding domain"/>
    <property type="match status" value="1"/>
</dbReference>
<reference key="1">
    <citation type="submission" date="2009-04" db="EMBL/GenBank/DDBJ databases">
        <title>Genome sequence of Bacillus anthracis A0248.</title>
        <authorList>
            <person name="Dodson R.J."/>
            <person name="Munk A.C."/>
            <person name="Bruce D."/>
            <person name="Detter C."/>
            <person name="Tapia R."/>
            <person name="Sutton G."/>
            <person name="Sims D."/>
            <person name="Brettin T."/>
        </authorList>
    </citation>
    <scope>NUCLEOTIDE SEQUENCE [LARGE SCALE GENOMIC DNA]</scope>
    <source>
        <strain>A0248</strain>
    </source>
</reference>
<proteinExistence type="inferred from homology"/>
<gene>
    <name evidence="1" type="primary">argR</name>
    <name type="ordered locus">BAA_4416</name>
</gene>
<sequence length="149" mass="16928">MNKGQRHIKIREIIANKEIETQDELVDILRNEGFNVTQATVSRDIKELHLVKVPLHDGRYKYSLPADQRFNPLQKLKRNLVDSFVKLDTAGHMLVLKTLPGNAHSLGALIDHLEWDEIIGTICGDDTCLIICRTPEDTGVVSDRFLNML</sequence>
<keyword id="KW-0028">Amino-acid biosynthesis</keyword>
<keyword id="KW-0055">Arginine biosynthesis</keyword>
<keyword id="KW-0963">Cytoplasm</keyword>
<keyword id="KW-0238">DNA-binding</keyword>
<keyword id="KW-0678">Repressor</keyword>
<keyword id="KW-0804">Transcription</keyword>
<keyword id="KW-0805">Transcription regulation</keyword>